<proteinExistence type="inferred from homology"/>
<organism>
    <name type="scientific">Escherichia coli O127:H6 (strain E2348/69 / EPEC)</name>
    <dbReference type="NCBI Taxonomy" id="574521"/>
    <lineage>
        <taxon>Bacteria</taxon>
        <taxon>Pseudomonadati</taxon>
        <taxon>Pseudomonadota</taxon>
        <taxon>Gammaproteobacteria</taxon>
        <taxon>Enterobacterales</taxon>
        <taxon>Enterobacteriaceae</taxon>
        <taxon>Escherichia</taxon>
    </lineage>
</organism>
<comment type="function">
    <text evidence="1">Converts seryl-tRNA(Sec) to selenocysteinyl-tRNA(Sec) required for selenoprotein biosynthesis.</text>
</comment>
<comment type="catalytic activity">
    <reaction evidence="1">
        <text>L-seryl-tRNA(Sec) + selenophosphate + H(+) = L-selenocysteinyl-tRNA(Sec) + phosphate</text>
        <dbReference type="Rhea" id="RHEA:22728"/>
        <dbReference type="Rhea" id="RHEA-COMP:9742"/>
        <dbReference type="Rhea" id="RHEA-COMP:9743"/>
        <dbReference type="ChEBI" id="CHEBI:15378"/>
        <dbReference type="ChEBI" id="CHEBI:16144"/>
        <dbReference type="ChEBI" id="CHEBI:43474"/>
        <dbReference type="ChEBI" id="CHEBI:78533"/>
        <dbReference type="ChEBI" id="CHEBI:78573"/>
        <dbReference type="EC" id="2.9.1.1"/>
    </reaction>
</comment>
<comment type="cofactor">
    <cofactor evidence="1">
        <name>pyridoxal 5'-phosphate</name>
        <dbReference type="ChEBI" id="CHEBI:597326"/>
    </cofactor>
</comment>
<comment type="pathway">
    <text evidence="1">Aminoacyl-tRNA biosynthesis; selenocysteinyl-tRNA(Sec) biosynthesis; selenocysteinyl-tRNA(Sec) from L-seryl-tRNA(Sec) (bacterial route): step 1/1.</text>
</comment>
<comment type="subunit">
    <text evidence="1">Homodecamer; pentamer of dimers. Binds only one seryl-tRNA(Sec) per dimer.</text>
</comment>
<comment type="subcellular location">
    <subcellularLocation>
        <location evidence="1">Cytoplasm</location>
    </subcellularLocation>
</comment>
<comment type="similarity">
    <text evidence="1">Belongs to the SelA family.</text>
</comment>
<evidence type="ECO:0000255" key="1">
    <source>
        <dbReference type="HAMAP-Rule" id="MF_00423"/>
    </source>
</evidence>
<name>SELA_ECO27</name>
<accession>B7ULF0</accession>
<gene>
    <name evidence="1" type="primary">selA</name>
    <name type="ordered locus">E2348C_3841</name>
</gene>
<dbReference type="EC" id="2.9.1.1" evidence="1"/>
<dbReference type="EMBL" id="FM180568">
    <property type="protein sequence ID" value="CAS11389.1"/>
    <property type="molecule type" value="Genomic_DNA"/>
</dbReference>
<dbReference type="RefSeq" id="WP_000206233.1">
    <property type="nucleotide sequence ID" value="NC_011601.1"/>
</dbReference>
<dbReference type="SMR" id="B7ULF0"/>
<dbReference type="KEGG" id="ecg:E2348C_3841"/>
<dbReference type="HOGENOM" id="CLU_038142_1_0_6"/>
<dbReference type="UniPathway" id="UPA00906">
    <property type="reaction ID" value="UER00896"/>
</dbReference>
<dbReference type="Proteomes" id="UP000008205">
    <property type="component" value="Chromosome"/>
</dbReference>
<dbReference type="GO" id="GO:0005737">
    <property type="term" value="C:cytoplasm"/>
    <property type="evidence" value="ECO:0007669"/>
    <property type="project" value="UniProtKB-SubCell"/>
</dbReference>
<dbReference type="GO" id="GO:0004125">
    <property type="term" value="F:L-seryl-tRNA(Sec) selenium transferase activity"/>
    <property type="evidence" value="ECO:0007669"/>
    <property type="project" value="UniProtKB-UniRule"/>
</dbReference>
<dbReference type="GO" id="GO:0001717">
    <property type="term" value="P:conversion of seryl-tRNAsec to selenocys-tRNAsec"/>
    <property type="evidence" value="ECO:0007669"/>
    <property type="project" value="UniProtKB-UniRule"/>
</dbReference>
<dbReference type="GO" id="GO:0001514">
    <property type="term" value="P:selenocysteine incorporation"/>
    <property type="evidence" value="ECO:0007669"/>
    <property type="project" value="UniProtKB-UniRule"/>
</dbReference>
<dbReference type="FunFam" id="3.40.640.10:FF:000028">
    <property type="entry name" value="L-seryl-tRNA(Sec) selenium transferase"/>
    <property type="match status" value="1"/>
</dbReference>
<dbReference type="FunFam" id="3.90.1150.180:FF:000001">
    <property type="entry name" value="L-seryl-tRNA(Sec) selenium transferase"/>
    <property type="match status" value="1"/>
</dbReference>
<dbReference type="Gene3D" id="3.90.1150.180">
    <property type="match status" value="1"/>
</dbReference>
<dbReference type="Gene3D" id="3.40.640.10">
    <property type="entry name" value="Type I PLP-dependent aspartate aminotransferase-like (Major domain)"/>
    <property type="match status" value="1"/>
</dbReference>
<dbReference type="HAMAP" id="MF_00423">
    <property type="entry name" value="SelA"/>
    <property type="match status" value="1"/>
</dbReference>
<dbReference type="InterPro" id="IPR015424">
    <property type="entry name" value="PyrdxlP-dep_Trfase"/>
</dbReference>
<dbReference type="InterPro" id="IPR015421">
    <property type="entry name" value="PyrdxlP-dep_Trfase_major"/>
</dbReference>
<dbReference type="InterPro" id="IPR018319">
    <property type="entry name" value="SelA-like"/>
</dbReference>
<dbReference type="InterPro" id="IPR004534">
    <property type="entry name" value="SelA_trans"/>
</dbReference>
<dbReference type="InterPro" id="IPR025862">
    <property type="entry name" value="SelA_trans_N_dom"/>
</dbReference>
<dbReference type="NCBIfam" id="TIGR00474">
    <property type="entry name" value="selA"/>
    <property type="match status" value="1"/>
</dbReference>
<dbReference type="PANTHER" id="PTHR32328">
    <property type="entry name" value="L-SERYL-TRNA(SEC) SELENIUM TRANSFERASE"/>
    <property type="match status" value="1"/>
</dbReference>
<dbReference type="PANTHER" id="PTHR32328:SF0">
    <property type="entry name" value="L-SERYL-TRNA(SEC) SELENIUM TRANSFERASE"/>
    <property type="match status" value="1"/>
</dbReference>
<dbReference type="Pfam" id="PF12390">
    <property type="entry name" value="Se-cys_synth_N"/>
    <property type="match status" value="1"/>
</dbReference>
<dbReference type="Pfam" id="PF03841">
    <property type="entry name" value="SelA"/>
    <property type="match status" value="1"/>
</dbReference>
<dbReference type="SUPFAM" id="SSF53383">
    <property type="entry name" value="PLP-dependent transferases"/>
    <property type="match status" value="1"/>
</dbReference>
<reference key="1">
    <citation type="journal article" date="2009" name="J. Bacteriol.">
        <title>Complete genome sequence and comparative genome analysis of enteropathogenic Escherichia coli O127:H6 strain E2348/69.</title>
        <authorList>
            <person name="Iguchi A."/>
            <person name="Thomson N.R."/>
            <person name="Ogura Y."/>
            <person name="Saunders D."/>
            <person name="Ooka T."/>
            <person name="Henderson I.R."/>
            <person name="Harris D."/>
            <person name="Asadulghani M."/>
            <person name="Kurokawa K."/>
            <person name="Dean P."/>
            <person name="Kenny B."/>
            <person name="Quail M.A."/>
            <person name="Thurston S."/>
            <person name="Dougan G."/>
            <person name="Hayashi T."/>
            <person name="Parkhill J."/>
            <person name="Frankel G."/>
        </authorList>
    </citation>
    <scope>NUCLEOTIDE SEQUENCE [LARGE SCALE GENOMIC DNA]</scope>
    <source>
        <strain>E2348/69 / EPEC</strain>
    </source>
</reference>
<sequence length="463" mass="50741">MTTETRSLYSQLPAIDRLLRDSSFLSLRDTYGHTRVVELLRQMLDEAREMIRDSQTLPAWCENWAQEVDARLTKEAQSALRPVINLTGTVLHTNLGRALQAEAAVEAVTKAMRSPVTLEYDLDDAGRGHRDRALAQLLCRITGAEDACIVNNNAAAVLLMLAATASGKEVVVSRGELVEIGGAFRIPDVMRQAGCTLHEVGTTNRTHAKDYRQAVNENTALLMKVHTSNYSIQGFTKAIDEAELVALGKELDVPVVTDLGSGSLVDLSQYGLPKEPMPQELIAAGVSLVSFSGDKLLGGPQAGIIVGKKEMIARLQSHPLKRALRADKMTLAALEATLRLYLHPEALSEKLPTLRLLTRSAEVIQIQAQRLQAPLAAHYGAEFAVQVMPCLSQIGSGSLPVDRLPSAALTFTPHDGRGSHLESLAARWRELPVPVIGRIYDGRLWLDLRCLEDEQRFLEMLLK</sequence>
<keyword id="KW-0963">Cytoplasm</keyword>
<keyword id="KW-0648">Protein biosynthesis</keyword>
<keyword id="KW-0663">Pyridoxal phosphate</keyword>
<keyword id="KW-1185">Reference proteome</keyword>
<keyword id="KW-0711">Selenium</keyword>
<keyword id="KW-0808">Transferase</keyword>
<feature type="chain" id="PRO_1000134921" description="L-seryl-tRNA(Sec) selenium transferase">
    <location>
        <begin position="1"/>
        <end position="463"/>
    </location>
</feature>
<feature type="modified residue" description="N6-(pyridoxal phosphate)lysine" evidence="1">
    <location>
        <position position="295"/>
    </location>
</feature>
<protein>
    <recommendedName>
        <fullName evidence="1">L-seryl-tRNA(Sec) selenium transferase</fullName>
        <ecNumber evidence="1">2.9.1.1</ecNumber>
    </recommendedName>
    <alternativeName>
        <fullName evidence="1">Selenocysteine synthase</fullName>
        <shortName evidence="1">Sec synthase</shortName>
    </alternativeName>
    <alternativeName>
        <fullName evidence="1">Selenocysteinyl-tRNA(Sec) synthase</fullName>
    </alternativeName>
</protein>